<feature type="chain" id="PRO_1000003152" description="Ribosome-recycling factor">
    <location>
        <begin position="1"/>
        <end position="185"/>
    </location>
</feature>
<gene>
    <name evidence="1" type="primary">frr</name>
    <name type="ordered locus">cbdbA318</name>
</gene>
<name>RRF_DEHMC</name>
<organism>
    <name type="scientific">Dehalococcoides mccartyi (strain CBDB1)</name>
    <dbReference type="NCBI Taxonomy" id="255470"/>
    <lineage>
        <taxon>Bacteria</taxon>
        <taxon>Bacillati</taxon>
        <taxon>Chloroflexota</taxon>
        <taxon>Dehalococcoidia</taxon>
        <taxon>Dehalococcoidales</taxon>
        <taxon>Dehalococcoidaceae</taxon>
        <taxon>Dehalococcoides</taxon>
    </lineage>
</organism>
<reference key="1">
    <citation type="journal article" date="2005" name="Nat. Biotechnol.">
        <title>Genome sequence of the chlorinated compound-respiring bacterium Dehalococcoides species strain CBDB1.</title>
        <authorList>
            <person name="Kube M."/>
            <person name="Beck A."/>
            <person name="Zinder S.H."/>
            <person name="Kuhl H."/>
            <person name="Reinhardt R."/>
            <person name="Adrian L."/>
        </authorList>
    </citation>
    <scope>NUCLEOTIDE SEQUENCE [LARGE SCALE GENOMIC DNA]</scope>
    <source>
        <strain>CBDB1</strain>
    </source>
</reference>
<proteinExistence type="inferred from homology"/>
<keyword id="KW-0963">Cytoplasm</keyword>
<keyword id="KW-0648">Protein biosynthesis</keyword>
<sequence>MINEILQKSEKKMSASLDVLLQELSGIRTGRSSPALVEHIRVEYAGVPTPINHLANISAPDPRYITIQPWDRSCLSAIEKAIMKSDLGLMPNNDGNIIRLNIPPLSEERRQEMIKIVNKRLEEDKIAMRNVRRDAMDEMKKLEKAKEISQDDLKRGSDQLQKITDNFIAKADKLGADKEAELRQV</sequence>
<comment type="function">
    <text evidence="1">Responsible for the release of ribosomes from messenger RNA at the termination of protein biosynthesis. May increase the efficiency of translation by recycling ribosomes from one round of translation to another.</text>
</comment>
<comment type="subcellular location">
    <subcellularLocation>
        <location evidence="1">Cytoplasm</location>
    </subcellularLocation>
</comment>
<comment type="similarity">
    <text evidence="1">Belongs to the RRF family.</text>
</comment>
<dbReference type="EMBL" id="AJ965256">
    <property type="protein sequence ID" value="CAI82542.1"/>
    <property type="molecule type" value="Genomic_DNA"/>
</dbReference>
<dbReference type="RefSeq" id="WP_011308899.1">
    <property type="nucleotide sequence ID" value="NC_007356.1"/>
</dbReference>
<dbReference type="SMR" id="Q3ZZC4"/>
<dbReference type="KEGG" id="deh:cbdbA318"/>
<dbReference type="HOGENOM" id="CLU_073981_2_0_0"/>
<dbReference type="Proteomes" id="UP000000433">
    <property type="component" value="Chromosome"/>
</dbReference>
<dbReference type="GO" id="GO:0005737">
    <property type="term" value="C:cytoplasm"/>
    <property type="evidence" value="ECO:0007669"/>
    <property type="project" value="UniProtKB-SubCell"/>
</dbReference>
<dbReference type="GO" id="GO:0043023">
    <property type="term" value="F:ribosomal large subunit binding"/>
    <property type="evidence" value="ECO:0007669"/>
    <property type="project" value="TreeGrafter"/>
</dbReference>
<dbReference type="GO" id="GO:0006415">
    <property type="term" value="P:translational termination"/>
    <property type="evidence" value="ECO:0007669"/>
    <property type="project" value="UniProtKB-UniRule"/>
</dbReference>
<dbReference type="CDD" id="cd00520">
    <property type="entry name" value="RRF"/>
    <property type="match status" value="1"/>
</dbReference>
<dbReference type="FunFam" id="1.10.132.20:FF:000001">
    <property type="entry name" value="Ribosome-recycling factor"/>
    <property type="match status" value="1"/>
</dbReference>
<dbReference type="FunFam" id="3.30.1360.40:FF:000001">
    <property type="entry name" value="Ribosome-recycling factor"/>
    <property type="match status" value="1"/>
</dbReference>
<dbReference type="Gene3D" id="3.30.1360.40">
    <property type="match status" value="1"/>
</dbReference>
<dbReference type="Gene3D" id="1.10.132.20">
    <property type="entry name" value="Ribosome-recycling factor"/>
    <property type="match status" value="1"/>
</dbReference>
<dbReference type="HAMAP" id="MF_00040">
    <property type="entry name" value="RRF"/>
    <property type="match status" value="1"/>
</dbReference>
<dbReference type="InterPro" id="IPR002661">
    <property type="entry name" value="Ribosome_recyc_fac"/>
</dbReference>
<dbReference type="InterPro" id="IPR023584">
    <property type="entry name" value="Ribosome_recyc_fac_dom"/>
</dbReference>
<dbReference type="InterPro" id="IPR036191">
    <property type="entry name" value="RRF_sf"/>
</dbReference>
<dbReference type="NCBIfam" id="TIGR00496">
    <property type="entry name" value="frr"/>
    <property type="match status" value="1"/>
</dbReference>
<dbReference type="PANTHER" id="PTHR20982:SF3">
    <property type="entry name" value="MITOCHONDRIAL RIBOSOME RECYCLING FACTOR PSEUDO 1"/>
    <property type="match status" value="1"/>
</dbReference>
<dbReference type="PANTHER" id="PTHR20982">
    <property type="entry name" value="RIBOSOME RECYCLING FACTOR"/>
    <property type="match status" value="1"/>
</dbReference>
<dbReference type="Pfam" id="PF01765">
    <property type="entry name" value="RRF"/>
    <property type="match status" value="1"/>
</dbReference>
<dbReference type="SUPFAM" id="SSF55194">
    <property type="entry name" value="Ribosome recycling factor, RRF"/>
    <property type="match status" value="1"/>
</dbReference>
<accession>Q3ZZC4</accession>
<protein>
    <recommendedName>
        <fullName evidence="1">Ribosome-recycling factor</fullName>
        <shortName evidence="1">RRF</shortName>
    </recommendedName>
    <alternativeName>
        <fullName evidence="1">Ribosome-releasing factor</fullName>
    </alternativeName>
</protein>
<evidence type="ECO:0000255" key="1">
    <source>
        <dbReference type="HAMAP-Rule" id="MF_00040"/>
    </source>
</evidence>